<keyword id="KW-0002">3D-structure</keyword>
<keyword id="KW-1167">Clathrin- and caveolin-independent endocytosis of virus by host</keyword>
<keyword id="KW-1165">Clathrin-mediated endocytosis of virus by host</keyword>
<keyword id="KW-1015">Disulfide bond</keyword>
<keyword id="KW-1170">Fusion of virus membrane with host endosomal membrane</keyword>
<keyword id="KW-1168">Fusion of virus membrane with host membrane</keyword>
<keyword id="KW-0325">Glycoprotein</keyword>
<keyword id="KW-0348">Hemagglutinin</keyword>
<keyword id="KW-1032">Host cell membrane</keyword>
<keyword id="KW-1043">Host membrane</keyword>
<keyword id="KW-0945">Host-virus interaction</keyword>
<keyword id="KW-0449">Lipoprotein</keyword>
<keyword id="KW-0472">Membrane</keyword>
<keyword id="KW-0564">Palmitate</keyword>
<keyword id="KW-0732">Signal</keyword>
<keyword id="KW-0812">Transmembrane</keyword>
<keyword id="KW-1133">Transmembrane helix</keyword>
<keyword id="KW-1161">Viral attachment to host cell</keyword>
<keyword id="KW-0261">Viral envelope protein</keyword>
<keyword id="KW-1162">Viral penetration into host cytoplasm</keyword>
<keyword id="KW-0946">Virion</keyword>
<keyword id="KW-1164">Virus endocytosis by host</keyword>
<keyword id="KW-1160">Virus entry into host cell</keyword>
<comment type="function">
    <text evidence="1">Binds to sialic acid-containing receptors on the cell surface, bringing about the attachment of the virus particle to the cell. This attachment induces virion internalization either through clathrin-dependent endocytosis or through clathrin- and caveolin-independent pathway. Plays a major role in the determination of host range restriction and virulence. Class I viral fusion protein. Responsible for penetration of the virus into the cell cytoplasm by mediating the fusion of the membrane of the endocytosed virus particle with the endosomal membrane. Low pH in endosomes induces an irreversible conformational change in HA2, releasing the fusion hydrophobic peptide. Several trimers are required to form a competent fusion pore.</text>
</comment>
<comment type="subunit">
    <text evidence="1">Homotrimer of disulfide-linked HA1-HA2.</text>
</comment>
<comment type="subcellular location">
    <subcellularLocation>
        <location evidence="1">Virion membrane</location>
        <topology evidence="1">Single-pass type I membrane protein</topology>
    </subcellularLocation>
    <subcellularLocation>
        <location evidence="1">Host apical cell membrane</location>
        <topology evidence="1">Single-pass type I membrane protein</topology>
    </subcellularLocation>
    <text evidence="1">Targeted to the apical plasma membrane in epithelial polarized cells through a signal present in the transmembrane domain. Associated with glycosphingolipid- and cholesterol-enriched detergent-resistant lipid rafts.</text>
</comment>
<comment type="PTM">
    <text evidence="1">Palmitoylated.</text>
</comment>
<comment type="PTM">
    <text evidence="1">In natural infection, inactive HA is matured into HA1 and HA2 outside the cell by one or more trypsin-like, arginine-specific endoprotease secreted by the bronchial epithelial cells. One identified protease that may be involved in this process is secreted in lungs by club cells.</text>
</comment>
<comment type="miscellaneous">
    <text>Major glycoprotein, comprises over 80% of the envelope proteins present in virus particle.</text>
</comment>
<comment type="miscellaneous">
    <text>The extent of infection into host organism is determined by HA. Influenza viruses bud from the apical surface of polarized epithelial cells (e.g. bronchial epithelial cells) into lumen of lungs and are therefore usually pneumotropic. The reason is that HA is cleaved by tryptase clara which is restricted to lungs. However, HAs of H5 and H7 pantropic avian viruses subtypes can be cleaved by furin and subtilisin-type enzymes, allowing the virus to grow in other organs than lungs.</text>
</comment>
<comment type="miscellaneous">
    <text>The influenza A genome consist of 8 RNA segments. Genetic variation of hemagglutinin and/or neuraminidase genes results in the emergence of new influenza strains. The mechanism of variation can be the result of point mutations or the result of genetic reassortment between segments of two different strains.</text>
</comment>
<comment type="similarity">
    <text evidence="1">Belongs to the influenza viruses hemagglutinin family.</text>
</comment>
<sequence length="551" mass="62506">MEKIVLLFAIVSLVKSDQICIGYHANNSTEQVDTIMEKNVTVTHAQDILEKTHNGKLCDLDGVKPLILRDCSVAGWLLGNPMCDEFINVPEWSYIVEKANPANDLCYPGDFNDYEELKHLLSRINHFEKIQIIPKNSWSSHEASLGVSSACPYQGKSSFFRNVVWLIKKNNAYPTIKRSYNNTNQEDLLVLWGIHHPNDAAEQTRLYQNPTTYISVGTSTLNQRLVPKIATRSKVNGQNGRMEFFWTILKPNDAINFESNGNFIAPEYAYKIVKKGDSAIMKSELEYGNCNTKCQTPMGAINSSMPFHNIHPLTIGECPKYVKSNRLVLATGLRNSPQRERRRKKRGLFGAIAGFIEGGWQGMVDGWYGYHHSNEQGSGYAADKESTQKAIDGVTNKVNSIIDKMNTQFEAVGREFNNLERRIENLNKKMEDGFLDVWTYNAELLVLMENERTLDFHDSNVKNLYDKVRLQLRDNAKELGNGCFEFYHKCDNECMESVRNGTYDYPQYSEEARLKREEISGVKLESIGTYQILSIYSTVASSLALAIMVAG</sequence>
<evidence type="ECO:0000255" key="1">
    <source>
        <dbReference type="HAMAP-Rule" id="MF_04072"/>
    </source>
</evidence>
<evidence type="ECO:0007829" key="2">
    <source>
        <dbReference type="PDB" id="3FKU"/>
    </source>
</evidence>
<evidence type="ECO:0007829" key="3">
    <source>
        <dbReference type="PDB" id="3ZNK"/>
    </source>
</evidence>
<reference key="1">
    <citation type="journal article" date="2004" name="Proc. Natl. Acad. Sci. U.S.A.">
        <title>H5N1 influenza: a protean pandemic threat.</title>
        <authorList>
            <person name="Guan Y."/>
            <person name="Poon L.L.M."/>
            <person name="Cheung C.Y."/>
            <person name="Ellis T.M."/>
            <person name="Lim W."/>
            <person name="Lipatov A.S."/>
            <person name="Chan K.H."/>
            <person name="Sturm-Ramirez K.M."/>
            <person name="Cheung C.L."/>
            <person name="Leung Y.H.C."/>
            <person name="Yuen K.Y."/>
            <person name="Webster R.G."/>
            <person name="Peiris J.S.M."/>
        </authorList>
    </citation>
    <scope>NUCLEOTIDE SEQUENCE [GENOMIC RNA]</scope>
</reference>
<dbReference type="EMBL" id="AY575869">
    <property type="protein sequence ID" value="AAT39065.1"/>
    <property type="molecule type" value="Genomic_DNA"/>
</dbReference>
<dbReference type="PDB" id="3FKU">
    <property type="method" value="X-ray"/>
    <property type="resolution" value="3.20 A"/>
    <property type="chains" value="A/C/E/G/I/K=17-346, B/D/F/H/J/L=347-522"/>
</dbReference>
<dbReference type="PDB" id="3ZNK">
    <property type="method" value="X-ray"/>
    <property type="resolution" value="2.71 A"/>
    <property type="chains" value="B/D/F=347-512"/>
</dbReference>
<dbReference type="PDB" id="4MHH">
    <property type="method" value="X-ray"/>
    <property type="resolution" value="3.56 A"/>
    <property type="chains" value="B/D/F=347-520"/>
</dbReference>
<dbReference type="PDBsum" id="3FKU"/>
<dbReference type="PDBsum" id="3ZNK"/>
<dbReference type="PDBsum" id="4MHH"/>
<dbReference type="SMR" id="Q6J8F6"/>
<dbReference type="GlyCosmos" id="Q6J8F6">
    <property type="glycosylation" value="6 sites, No reported glycans"/>
</dbReference>
<dbReference type="ABCD" id="Q6J8F6">
    <property type="antibodies" value="16 sequenced antibodies"/>
</dbReference>
<dbReference type="EvolutionaryTrace" id="Q6J8F6"/>
<dbReference type="GO" id="GO:0020002">
    <property type="term" value="C:host cell plasma membrane"/>
    <property type="evidence" value="ECO:0007669"/>
    <property type="project" value="UniProtKB-SubCell"/>
</dbReference>
<dbReference type="GO" id="GO:0016020">
    <property type="term" value="C:membrane"/>
    <property type="evidence" value="ECO:0007669"/>
    <property type="project" value="UniProtKB-KW"/>
</dbReference>
<dbReference type="GO" id="GO:0019031">
    <property type="term" value="C:viral envelope"/>
    <property type="evidence" value="ECO:0007669"/>
    <property type="project" value="UniProtKB-KW"/>
</dbReference>
<dbReference type="GO" id="GO:0055036">
    <property type="term" value="C:virion membrane"/>
    <property type="evidence" value="ECO:0007669"/>
    <property type="project" value="UniProtKB-SubCell"/>
</dbReference>
<dbReference type="GO" id="GO:0046789">
    <property type="term" value="F:host cell surface receptor binding"/>
    <property type="evidence" value="ECO:0007669"/>
    <property type="project" value="InterPro"/>
</dbReference>
<dbReference type="GO" id="GO:0075512">
    <property type="term" value="P:clathrin-dependent endocytosis of virus by host cell"/>
    <property type="evidence" value="ECO:0007669"/>
    <property type="project" value="UniProtKB-KW"/>
</dbReference>
<dbReference type="GO" id="GO:0039654">
    <property type="term" value="P:fusion of virus membrane with host endosome membrane"/>
    <property type="evidence" value="ECO:0007669"/>
    <property type="project" value="UniProtKB-KW"/>
</dbReference>
<dbReference type="GO" id="GO:0019064">
    <property type="term" value="P:fusion of virus membrane with host plasma membrane"/>
    <property type="evidence" value="ECO:0007669"/>
    <property type="project" value="InterPro"/>
</dbReference>
<dbReference type="GO" id="GO:0019062">
    <property type="term" value="P:virion attachment to host cell"/>
    <property type="evidence" value="ECO:0007669"/>
    <property type="project" value="UniProtKB-KW"/>
</dbReference>
<dbReference type="FunFam" id="3.90.209.20:FF:000001">
    <property type="entry name" value="Hemagglutinin"/>
    <property type="match status" value="1"/>
</dbReference>
<dbReference type="Gene3D" id="3.90.20.10">
    <property type="match status" value="1"/>
</dbReference>
<dbReference type="Gene3D" id="3.90.209.20">
    <property type="match status" value="1"/>
</dbReference>
<dbReference type="Gene3D" id="2.10.77.10">
    <property type="entry name" value="Hemagglutinin Chain A, Domain 2"/>
    <property type="match status" value="1"/>
</dbReference>
<dbReference type="HAMAP" id="MF_04072">
    <property type="entry name" value="INFV_HEMA"/>
    <property type="match status" value="1"/>
</dbReference>
<dbReference type="InterPro" id="IPR008980">
    <property type="entry name" value="Capsid_hemagglutn"/>
</dbReference>
<dbReference type="InterPro" id="IPR013828">
    <property type="entry name" value="Hemagglutn_HA1_a/b_dom_sf"/>
</dbReference>
<dbReference type="InterPro" id="IPR000149">
    <property type="entry name" value="Hemagglutn_influenz_A"/>
</dbReference>
<dbReference type="InterPro" id="IPR001364">
    <property type="entry name" value="Hemagglutn_influenz_A/B"/>
</dbReference>
<dbReference type="Pfam" id="PF00509">
    <property type="entry name" value="Hemagglutinin"/>
    <property type="match status" value="1"/>
</dbReference>
<dbReference type="PRINTS" id="PR00330">
    <property type="entry name" value="HEMAGGLUTN1"/>
</dbReference>
<dbReference type="PRINTS" id="PR00329">
    <property type="entry name" value="HEMAGGLUTN12"/>
</dbReference>
<dbReference type="SUPFAM" id="SSF58064">
    <property type="entry name" value="Influenza hemagglutinin (stalk)"/>
    <property type="match status" value="1"/>
</dbReference>
<dbReference type="SUPFAM" id="SSF49818">
    <property type="entry name" value="Viral protein domain"/>
    <property type="match status" value="1"/>
</dbReference>
<accession>Q6J8F6</accession>
<gene>
    <name evidence="1" type="primary">HA</name>
</gene>
<proteinExistence type="evidence at protein level"/>
<organism>
    <name type="scientific">Influenza A virus (strain A/Hong Kong/212/2003 H5N1 genotype Z+)</name>
    <dbReference type="NCBI Taxonomy" id="279794"/>
    <lineage>
        <taxon>Viruses</taxon>
        <taxon>Riboviria</taxon>
        <taxon>Orthornavirae</taxon>
        <taxon>Negarnaviricota</taxon>
        <taxon>Polyploviricotina</taxon>
        <taxon>Insthoviricetes</taxon>
        <taxon>Articulavirales</taxon>
        <taxon>Orthomyxoviridae</taxon>
        <taxon>Alphainfluenzavirus</taxon>
        <taxon>Alphainfluenzavirus influenzae</taxon>
        <taxon>Influenza A virus</taxon>
    </lineage>
</organism>
<feature type="signal peptide" evidence="1">
    <location>
        <begin position="1"/>
        <end position="16"/>
    </location>
</feature>
<feature type="chain" id="PRO_0000440828" description="Hemagglutinin" evidence="1">
    <location>
        <begin position="17"/>
        <end position="551"/>
    </location>
</feature>
<feature type="chain" id="PRO_0000440829" description="Hemagglutinin HA1 chain" evidence="1">
    <location>
        <begin position="17"/>
        <end position="346"/>
    </location>
</feature>
<feature type="chain" id="PRO_0000440830" description="Hemagglutinin HA2 chain" evidence="1">
    <location>
        <begin position="347"/>
        <end position="551"/>
    </location>
</feature>
<feature type="topological domain" description="Extracellular" evidence="1">
    <location>
        <begin position="17"/>
        <end position="530"/>
    </location>
</feature>
<feature type="transmembrane region" description="Helical" evidence="1">
    <location>
        <begin position="531"/>
        <end position="551"/>
    </location>
</feature>
<feature type="site" description="Cleavage; by host" evidence="1">
    <location>
        <begin position="346"/>
        <end position="347"/>
    </location>
</feature>
<feature type="glycosylation site" description="N-linked (GlcNAc...) asparagine; by host" evidence="1">
    <location>
        <position position="26"/>
    </location>
</feature>
<feature type="glycosylation site" description="N-linked (GlcNAc...) asparagine; by host" evidence="1">
    <location>
        <position position="27"/>
    </location>
</feature>
<feature type="glycosylation site" description="N-linked (GlcNAc...) asparagine; by host" evidence="1">
    <location>
        <position position="39"/>
    </location>
</feature>
<feature type="glycosylation site" description="N-linked (GlcNAc...) asparagine; by host" evidence="1">
    <location>
        <position position="181"/>
    </location>
</feature>
<feature type="glycosylation site" description="N-linked (GlcNAc...) asparagine; by host" evidence="1">
    <location>
        <position position="302"/>
    </location>
</feature>
<feature type="glycosylation site" description="N-linked (GlcNAc...) asparagine; by host" evidence="1">
    <location>
        <position position="500"/>
    </location>
</feature>
<feature type="disulfide bond" description="Interchain (between HA1 and HA2 chains)" evidence="1">
    <location>
        <begin position="20"/>
        <end position="483"/>
    </location>
</feature>
<feature type="disulfide bond" evidence="1">
    <location>
        <begin position="58"/>
        <end position="290"/>
    </location>
</feature>
<feature type="disulfide bond" evidence="1">
    <location>
        <begin position="71"/>
        <end position="83"/>
    </location>
</feature>
<feature type="disulfide bond" evidence="1">
    <location>
        <begin position="106"/>
        <end position="151"/>
    </location>
</feature>
<feature type="disulfide bond" evidence="1">
    <location>
        <begin position="294"/>
        <end position="318"/>
    </location>
</feature>
<feature type="disulfide bond" evidence="1">
    <location>
        <begin position="490"/>
        <end position="494"/>
    </location>
</feature>
<feature type="non-terminal residue">
    <location>
        <position position="551"/>
    </location>
</feature>
<feature type="strand" evidence="2">
    <location>
        <begin position="18"/>
        <end position="24"/>
    </location>
</feature>
<feature type="strand" evidence="2">
    <location>
        <begin position="38"/>
        <end position="43"/>
    </location>
</feature>
<feature type="strand" evidence="2">
    <location>
        <begin position="45"/>
        <end position="47"/>
    </location>
</feature>
<feature type="strand" evidence="2">
    <location>
        <begin position="55"/>
        <end position="62"/>
    </location>
</feature>
<feature type="helix" evidence="2">
    <location>
        <begin position="73"/>
        <end position="78"/>
    </location>
</feature>
<feature type="helix" evidence="2">
    <location>
        <begin position="84"/>
        <end position="86"/>
    </location>
</feature>
<feature type="strand" evidence="2">
    <location>
        <begin position="102"/>
        <end position="104"/>
    </location>
</feature>
<feature type="strand" evidence="2">
    <location>
        <begin position="109"/>
        <end position="111"/>
    </location>
</feature>
<feature type="helix" evidence="2">
    <location>
        <begin position="114"/>
        <end position="120"/>
    </location>
</feature>
<feature type="strand" evidence="2">
    <location>
        <begin position="127"/>
        <end position="133"/>
    </location>
</feature>
<feature type="helix" evidence="2">
    <location>
        <begin position="135"/>
        <end position="137"/>
    </location>
</feature>
<feature type="strand" evidence="2">
    <location>
        <begin position="148"/>
        <end position="153"/>
    </location>
</feature>
<feature type="strand" evidence="2">
    <location>
        <begin position="156"/>
        <end position="158"/>
    </location>
</feature>
<feature type="strand" evidence="2">
    <location>
        <begin position="161"/>
        <end position="165"/>
    </location>
</feature>
<feature type="strand" evidence="2">
    <location>
        <begin position="176"/>
        <end position="178"/>
    </location>
</feature>
<feature type="strand" evidence="2">
    <location>
        <begin position="184"/>
        <end position="186"/>
    </location>
</feature>
<feature type="strand" evidence="2">
    <location>
        <begin position="188"/>
        <end position="196"/>
    </location>
</feature>
<feature type="helix" evidence="2">
    <location>
        <begin position="200"/>
        <end position="206"/>
    </location>
</feature>
<feature type="strand" evidence="2">
    <location>
        <begin position="240"/>
        <end position="249"/>
    </location>
</feature>
<feature type="strand" evidence="2">
    <location>
        <begin position="257"/>
        <end position="272"/>
    </location>
</feature>
<feature type="strand" evidence="2">
    <location>
        <begin position="287"/>
        <end position="296"/>
    </location>
</feature>
<feature type="strand" evidence="2">
    <location>
        <begin position="299"/>
        <end position="301"/>
    </location>
</feature>
<feature type="strand" evidence="2">
    <location>
        <begin position="305"/>
        <end position="308"/>
    </location>
</feature>
<feature type="strand" evidence="2">
    <location>
        <begin position="315"/>
        <end position="317"/>
    </location>
</feature>
<feature type="strand" evidence="2">
    <location>
        <begin position="328"/>
        <end position="330"/>
    </location>
</feature>
<feature type="turn" evidence="3">
    <location>
        <begin position="353"/>
        <end position="355"/>
    </location>
</feature>
<feature type="strand" evidence="2">
    <location>
        <begin position="358"/>
        <end position="360"/>
    </location>
</feature>
<feature type="strand" evidence="3">
    <location>
        <begin position="367"/>
        <end position="374"/>
    </location>
</feature>
<feature type="strand" evidence="3">
    <location>
        <begin position="377"/>
        <end position="382"/>
    </location>
</feature>
<feature type="helix" evidence="3">
    <location>
        <begin position="384"/>
        <end position="406"/>
    </location>
</feature>
<feature type="helix" evidence="3">
    <location>
        <begin position="421"/>
        <end position="472"/>
    </location>
</feature>
<feature type="helix" evidence="3">
    <location>
        <begin position="473"/>
        <end position="475"/>
    </location>
</feature>
<feature type="strand" evidence="3">
    <location>
        <begin position="476"/>
        <end position="478"/>
    </location>
</feature>
<feature type="strand" evidence="3">
    <location>
        <begin position="480"/>
        <end position="488"/>
    </location>
</feature>
<feature type="helix" evidence="3">
    <location>
        <begin position="492"/>
        <end position="500"/>
    </location>
</feature>
<feature type="helix" evidence="3">
    <location>
        <begin position="505"/>
        <end position="508"/>
    </location>
</feature>
<feature type="turn" evidence="2">
    <location>
        <begin position="519"/>
        <end position="521"/>
    </location>
</feature>
<protein>
    <recommendedName>
        <fullName evidence="1">Hemagglutinin</fullName>
    </recommendedName>
    <component>
        <recommendedName>
            <fullName evidence="1">Hemagglutinin HA1 chain</fullName>
        </recommendedName>
    </component>
    <component>
        <recommendedName>
            <fullName evidence="1">Hemagglutinin HA2 chain</fullName>
        </recommendedName>
    </component>
</protein>
<name>HEMA_I03A0</name>
<organismHost>
    <name type="scientific">Aves</name>
    <dbReference type="NCBI Taxonomy" id="8782"/>
</organismHost>
<organismHost>
    <name type="scientific">Felis catus</name>
    <name type="common">Cat</name>
    <name type="synonym">Felis silvestris catus</name>
    <dbReference type="NCBI Taxonomy" id="9685"/>
</organismHost>
<organismHost>
    <name type="scientific">Homo sapiens</name>
    <name type="common">Human</name>
    <dbReference type="NCBI Taxonomy" id="9606"/>
</organismHost>
<organismHost>
    <name type="scientific">Panthera pardus</name>
    <name type="common">Leopard</name>
    <name type="synonym">Felis pardus</name>
    <dbReference type="NCBI Taxonomy" id="9691"/>
</organismHost>
<organismHost>
    <name type="scientific">Panthera tigris</name>
    <name type="common">Tiger</name>
    <dbReference type="NCBI Taxonomy" id="9694"/>
</organismHost>
<organismHost>
    <name type="scientific">Sus scrofa</name>
    <name type="common">Pig</name>
    <dbReference type="NCBI Taxonomy" id="9823"/>
</organismHost>